<keyword id="KW-1017">Isopeptide bond</keyword>
<keyword id="KW-0597">Phosphoprotein</keyword>
<keyword id="KW-0647">Proteasome</keyword>
<keyword id="KW-1185">Reference proteome</keyword>
<keyword id="KW-0825">Tumor antigen</keyword>
<keyword id="KW-0832">Ubl conjugation</keyword>
<evidence type="ECO:0000250" key="1">
    <source>
        <dbReference type="UniProtKB" id="O43242"/>
    </source>
</evidence>
<evidence type="ECO:0000255" key="2">
    <source>
        <dbReference type="PROSITE-ProRule" id="PRU01185"/>
    </source>
</evidence>
<evidence type="ECO:0000256" key="3">
    <source>
        <dbReference type="SAM" id="MobiDB-lite"/>
    </source>
</evidence>
<evidence type="ECO:0000269" key="4">
    <source>
    </source>
</evidence>
<evidence type="ECO:0000305" key="5"/>
<evidence type="ECO:0007744" key="6">
    <source>
    </source>
</evidence>
<comment type="function">
    <text evidence="1">Component of the 26S proteasome, a multiprotein complex involved in the ATP-dependent degradation of ubiquitinated proteins. This complex plays a key role in the maintenance of protein homeostasis by removing misfolded or damaged proteins, which could impair cellular functions, and by removing proteins whose functions are no longer required. Therefore, the proteasome participates in numerous cellular processes, including cell cycle progression, apoptosis, or DNA damage repair.</text>
</comment>
<comment type="subunit">
    <text evidence="1 4">Component of the 19S proteasome regulatory particle complex (PubMed:16857966). The 26S proteasome consists of a 20S core particle (CP) and two 19S regulatory subunits (RP) (By similarity). The regulatory particle is made of a lid composed of 9 subunits including PSMD3, a base containing 6 ATPases and few additional components (By similarity). Interacts with UBQLN1 (via ubiquitin-like domain) (By similarity). Interacts with ERCC6 (By similarity).</text>
</comment>
<comment type="similarity">
    <text evidence="5">Belongs to the proteasome subunit S3 family.</text>
</comment>
<feature type="chain" id="PRO_0000173817" description="26S proteasome non-ATPase regulatory subunit 3">
    <location>
        <begin position="1"/>
        <end position="530"/>
    </location>
</feature>
<feature type="domain" description="PCI" evidence="2">
    <location>
        <begin position="282"/>
        <end position="461"/>
    </location>
</feature>
<feature type="region of interest" description="Disordered" evidence="3">
    <location>
        <begin position="1"/>
        <end position="65"/>
    </location>
</feature>
<feature type="region of interest" description="Disordered" evidence="3">
    <location>
        <begin position="496"/>
        <end position="530"/>
    </location>
</feature>
<feature type="compositionally biased region" description="Basic and acidic residues" evidence="3">
    <location>
        <begin position="1"/>
        <end position="16"/>
    </location>
</feature>
<feature type="compositionally biased region" description="Pro residues" evidence="3">
    <location>
        <begin position="17"/>
        <end position="30"/>
    </location>
</feature>
<feature type="compositionally biased region" description="Basic and acidic residues" evidence="3">
    <location>
        <begin position="497"/>
        <end position="521"/>
    </location>
</feature>
<feature type="modified residue" description="Phosphoserine" evidence="1">
    <location>
        <position position="414"/>
    </location>
</feature>
<feature type="modified residue" description="Phosphoserine" evidence="6">
    <location>
        <position position="426"/>
    </location>
</feature>
<feature type="cross-link" description="Glycyl lysine isopeptide (Lys-Gly) (interchain with G-Cter in SUMO1); alternate" evidence="1">
    <location>
        <position position="36"/>
    </location>
</feature>
<feature type="cross-link" description="Glycyl lysine isopeptide (Lys-Gly) (interchain with G-Cter in SUMO2); alternate" evidence="1">
    <location>
        <position position="36"/>
    </location>
</feature>
<feature type="sequence conflict" description="In Ref. 1; AAA37241." evidence="5" ref="1">
    <original>AD</original>
    <variation>H</variation>
    <location>
        <begin position="12"/>
        <end position="13"/>
    </location>
</feature>
<feature type="sequence conflict" description="In Ref. 1; AAA37241." evidence="5" ref="1">
    <original>R</original>
    <variation>H</variation>
    <location>
        <position position="196"/>
    </location>
</feature>
<reference key="1">
    <citation type="journal article" date="1989" name="Cell">
        <title>Structure of the gene of tum- transplantation antigen P91A: the mutated exon encodes a peptide recognized with Ld by cytolytic T cells.</title>
        <authorList>
            <person name="Lurquin C."/>
            <person name="van Pel A."/>
            <person name="Mariame B."/>
            <person name="de Plaen E."/>
            <person name="Szikora J.-P."/>
            <person name="Janssens C."/>
            <person name="Reddehase M.J."/>
            <person name="Lejeune J."/>
            <person name="Boon T."/>
        </authorList>
    </citation>
    <scope>NUCLEOTIDE SEQUENCE [GENOMIC DNA]</scope>
</reference>
<reference key="2">
    <citation type="journal article" date="2005" name="Science">
        <title>The transcriptional landscape of the mammalian genome.</title>
        <authorList>
            <person name="Carninci P."/>
            <person name="Kasukawa T."/>
            <person name="Katayama S."/>
            <person name="Gough J."/>
            <person name="Frith M.C."/>
            <person name="Maeda N."/>
            <person name="Oyama R."/>
            <person name="Ravasi T."/>
            <person name="Lenhard B."/>
            <person name="Wells C."/>
            <person name="Kodzius R."/>
            <person name="Shimokawa K."/>
            <person name="Bajic V.B."/>
            <person name="Brenner S.E."/>
            <person name="Batalov S."/>
            <person name="Forrest A.R."/>
            <person name="Zavolan M."/>
            <person name="Davis M.J."/>
            <person name="Wilming L.G."/>
            <person name="Aidinis V."/>
            <person name="Allen J.E."/>
            <person name="Ambesi-Impiombato A."/>
            <person name="Apweiler R."/>
            <person name="Aturaliya R.N."/>
            <person name="Bailey T.L."/>
            <person name="Bansal M."/>
            <person name="Baxter L."/>
            <person name="Beisel K.W."/>
            <person name="Bersano T."/>
            <person name="Bono H."/>
            <person name="Chalk A.M."/>
            <person name="Chiu K.P."/>
            <person name="Choudhary V."/>
            <person name="Christoffels A."/>
            <person name="Clutterbuck D.R."/>
            <person name="Crowe M.L."/>
            <person name="Dalla E."/>
            <person name="Dalrymple B.P."/>
            <person name="de Bono B."/>
            <person name="Della Gatta G."/>
            <person name="di Bernardo D."/>
            <person name="Down T."/>
            <person name="Engstrom P."/>
            <person name="Fagiolini M."/>
            <person name="Faulkner G."/>
            <person name="Fletcher C.F."/>
            <person name="Fukushima T."/>
            <person name="Furuno M."/>
            <person name="Futaki S."/>
            <person name="Gariboldi M."/>
            <person name="Georgii-Hemming P."/>
            <person name="Gingeras T.R."/>
            <person name="Gojobori T."/>
            <person name="Green R.E."/>
            <person name="Gustincich S."/>
            <person name="Harbers M."/>
            <person name="Hayashi Y."/>
            <person name="Hensch T.K."/>
            <person name="Hirokawa N."/>
            <person name="Hill D."/>
            <person name="Huminiecki L."/>
            <person name="Iacono M."/>
            <person name="Ikeo K."/>
            <person name="Iwama A."/>
            <person name="Ishikawa T."/>
            <person name="Jakt M."/>
            <person name="Kanapin A."/>
            <person name="Katoh M."/>
            <person name="Kawasawa Y."/>
            <person name="Kelso J."/>
            <person name="Kitamura H."/>
            <person name="Kitano H."/>
            <person name="Kollias G."/>
            <person name="Krishnan S.P."/>
            <person name="Kruger A."/>
            <person name="Kummerfeld S.K."/>
            <person name="Kurochkin I.V."/>
            <person name="Lareau L.F."/>
            <person name="Lazarevic D."/>
            <person name="Lipovich L."/>
            <person name="Liu J."/>
            <person name="Liuni S."/>
            <person name="McWilliam S."/>
            <person name="Madan Babu M."/>
            <person name="Madera M."/>
            <person name="Marchionni L."/>
            <person name="Matsuda H."/>
            <person name="Matsuzawa S."/>
            <person name="Miki H."/>
            <person name="Mignone F."/>
            <person name="Miyake S."/>
            <person name="Morris K."/>
            <person name="Mottagui-Tabar S."/>
            <person name="Mulder N."/>
            <person name="Nakano N."/>
            <person name="Nakauchi H."/>
            <person name="Ng P."/>
            <person name="Nilsson R."/>
            <person name="Nishiguchi S."/>
            <person name="Nishikawa S."/>
            <person name="Nori F."/>
            <person name="Ohara O."/>
            <person name="Okazaki Y."/>
            <person name="Orlando V."/>
            <person name="Pang K.C."/>
            <person name="Pavan W.J."/>
            <person name="Pavesi G."/>
            <person name="Pesole G."/>
            <person name="Petrovsky N."/>
            <person name="Piazza S."/>
            <person name="Reed J."/>
            <person name="Reid J.F."/>
            <person name="Ring B.Z."/>
            <person name="Ringwald M."/>
            <person name="Rost B."/>
            <person name="Ruan Y."/>
            <person name="Salzberg S.L."/>
            <person name="Sandelin A."/>
            <person name="Schneider C."/>
            <person name="Schoenbach C."/>
            <person name="Sekiguchi K."/>
            <person name="Semple C.A."/>
            <person name="Seno S."/>
            <person name="Sessa L."/>
            <person name="Sheng Y."/>
            <person name="Shibata Y."/>
            <person name="Shimada H."/>
            <person name="Shimada K."/>
            <person name="Silva D."/>
            <person name="Sinclair B."/>
            <person name="Sperling S."/>
            <person name="Stupka E."/>
            <person name="Sugiura K."/>
            <person name="Sultana R."/>
            <person name="Takenaka Y."/>
            <person name="Taki K."/>
            <person name="Tammoja K."/>
            <person name="Tan S.L."/>
            <person name="Tang S."/>
            <person name="Taylor M.S."/>
            <person name="Tegner J."/>
            <person name="Teichmann S.A."/>
            <person name="Ueda H.R."/>
            <person name="van Nimwegen E."/>
            <person name="Verardo R."/>
            <person name="Wei C.L."/>
            <person name="Yagi K."/>
            <person name="Yamanishi H."/>
            <person name="Zabarovsky E."/>
            <person name="Zhu S."/>
            <person name="Zimmer A."/>
            <person name="Hide W."/>
            <person name="Bult C."/>
            <person name="Grimmond S.M."/>
            <person name="Teasdale R.D."/>
            <person name="Liu E.T."/>
            <person name="Brusic V."/>
            <person name="Quackenbush J."/>
            <person name="Wahlestedt C."/>
            <person name="Mattick J.S."/>
            <person name="Hume D.A."/>
            <person name="Kai C."/>
            <person name="Sasaki D."/>
            <person name="Tomaru Y."/>
            <person name="Fukuda S."/>
            <person name="Kanamori-Katayama M."/>
            <person name="Suzuki M."/>
            <person name="Aoki J."/>
            <person name="Arakawa T."/>
            <person name="Iida J."/>
            <person name="Imamura K."/>
            <person name="Itoh M."/>
            <person name="Kato T."/>
            <person name="Kawaji H."/>
            <person name="Kawagashira N."/>
            <person name="Kawashima T."/>
            <person name="Kojima M."/>
            <person name="Kondo S."/>
            <person name="Konno H."/>
            <person name="Nakano K."/>
            <person name="Ninomiya N."/>
            <person name="Nishio T."/>
            <person name="Okada M."/>
            <person name="Plessy C."/>
            <person name="Shibata K."/>
            <person name="Shiraki T."/>
            <person name="Suzuki S."/>
            <person name="Tagami M."/>
            <person name="Waki K."/>
            <person name="Watahiki A."/>
            <person name="Okamura-Oho Y."/>
            <person name="Suzuki H."/>
            <person name="Kawai J."/>
            <person name="Hayashizaki Y."/>
        </authorList>
    </citation>
    <scope>NUCLEOTIDE SEQUENCE [LARGE SCALE MRNA]</scope>
    <source>
        <strain>C57BL/6J</strain>
        <strain>NOD</strain>
        <tissue>Kidney</tissue>
        <tissue>Lung</tissue>
        <tissue>Thymus</tissue>
    </source>
</reference>
<reference key="3">
    <citation type="journal article" date="2009" name="PLoS Biol.">
        <title>Lineage-specific biology revealed by a finished genome assembly of the mouse.</title>
        <authorList>
            <person name="Church D.M."/>
            <person name="Goodstadt L."/>
            <person name="Hillier L.W."/>
            <person name="Zody M.C."/>
            <person name="Goldstein S."/>
            <person name="She X."/>
            <person name="Bult C.J."/>
            <person name="Agarwala R."/>
            <person name="Cherry J.L."/>
            <person name="DiCuccio M."/>
            <person name="Hlavina W."/>
            <person name="Kapustin Y."/>
            <person name="Meric P."/>
            <person name="Maglott D."/>
            <person name="Birtle Z."/>
            <person name="Marques A.C."/>
            <person name="Graves T."/>
            <person name="Zhou S."/>
            <person name="Teague B."/>
            <person name="Potamousis K."/>
            <person name="Churas C."/>
            <person name="Place M."/>
            <person name="Herschleb J."/>
            <person name="Runnheim R."/>
            <person name="Forrest D."/>
            <person name="Amos-Landgraf J."/>
            <person name="Schwartz D.C."/>
            <person name="Cheng Z."/>
            <person name="Lindblad-Toh K."/>
            <person name="Eichler E.E."/>
            <person name="Ponting C.P."/>
        </authorList>
    </citation>
    <scope>NUCLEOTIDE SEQUENCE [LARGE SCALE GENOMIC DNA]</scope>
    <source>
        <strain>C57BL/6J</strain>
    </source>
</reference>
<reference key="4">
    <citation type="submission" date="2005-07" db="EMBL/GenBank/DDBJ databases">
        <authorList>
            <person name="Mural R.J."/>
            <person name="Adams M.D."/>
            <person name="Myers E.W."/>
            <person name="Smith H.O."/>
            <person name="Venter J.C."/>
        </authorList>
    </citation>
    <scope>NUCLEOTIDE SEQUENCE [LARGE SCALE GENOMIC DNA]</scope>
</reference>
<reference key="5">
    <citation type="journal article" date="2004" name="Genome Res.">
        <title>The status, quality, and expansion of the NIH full-length cDNA project: the Mammalian Gene Collection (MGC).</title>
        <authorList>
            <consortium name="The MGC Project Team"/>
        </authorList>
    </citation>
    <scope>NUCLEOTIDE SEQUENCE [LARGE SCALE MRNA]</scope>
</reference>
<reference key="6">
    <citation type="journal article" date="2006" name="Circ. Res.">
        <title>Mapping the murine cardiac 26S proteasome complexes.</title>
        <authorList>
            <person name="Gomes A.V."/>
            <person name="Zong C."/>
            <person name="Edmondson R.D."/>
            <person name="Li X."/>
            <person name="Stefani E."/>
            <person name="Zhang J."/>
            <person name="Jones R.C."/>
            <person name="Thyparambil S."/>
            <person name="Wang G.W."/>
            <person name="Qiao X."/>
            <person name="Bardag-Gorce F."/>
            <person name="Ping P."/>
        </authorList>
    </citation>
    <scope>IDENTIFICATION IN THE 19S PROTEASOME REGULATORY COMPLEX</scope>
</reference>
<reference key="7">
    <citation type="journal article" date="2010" name="Cell">
        <title>A tissue-specific atlas of mouse protein phosphorylation and expression.</title>
        <authorList>
            <person name="Huttlin E.L."/>
            <person name="Jedrychowski M.P."/>
            <person name="Elias J.E."/>
            <person name="Goswami T."/>
            <person name="Rad R."/>
            <person name="Beausoleil S.A."/>
            <person name="Villen J."/>
            <person name="Haas W."/>
            <person name="Sowa M.E."/>
            <person name="Gygi S.P."/>
        </authorList>
    </citation>
    <scope>PHOSPHORYLATION [LARGE SCALE ANALYSIS] AT SER-426</scope>
    <scope>IDENTIFICATION BY MASS SPECTROMETRY [LARGE SCALE ANALYSIS]</scope>
    <source>
        <tissue>Brain</tissue>
        <tissue>Brown adipose tissue</tissue>
        <tissue>Heart</tissue>
        <tissue>Kidney</tissue>
        <tissue>Liver</tissue>
        <tissue>Lung</tissue>
        <tissue>Pancreas</tissue>
        <tissue>Spleen</tissue>
        <tissue>Testis</tissue>
    </source>
</reference>
<proteinExistence type="evidence at protein level"/>
<dbReference type="EMBL" id="M25149">
    <property type="protein sequence ID" value="AAA37241.1"/>
    <property type="molecule type" value="Genomic_DNA"/>
</dbReference>
<dbReference type="EMBL" id="AK145488">
    <property type="protein sequence ID" value="BAE26466.1"/>
    <property type="molecule type" value="mRNA"/>
</dbReference>
<dbReference type="EMBL" id="AK164593">
    <property type="protein sequence ID" value="BAE37842.1"/>
    <property type="molecule type" value="mRNA"/>
</dbReference>
<dbReference type="EMBL" id="AK165520">
    <property type="protein sequence ID" value="BAE38235.1"/>
    <property type="molecule type" value="mRNA"/>
</dbReference>
<dbReference type="EMBL" id="AK166683">
    <property type="protein sequence ID" value="BAE38942.1"/>
    <property type="molecule type" value="mRNA"/>
</dbReference>
<dbReference type="EMBL" id="AK166714">
    <property type="protein sequence ID" value="BAE38965.1"/>
    <property type="molecule type" value="mRNA"/>
</dbReference>
<dbReference type="EMBL" id="AK167285">
    <property type="protein sequence ID" value="BAE39391.1"/>
    <property type="molecule type" value="mRNA"/>
</dbReference>
<dbReference type="EMBL" id="AK169690">
    <property type="protein sequence ID" value="BAE41307.1"/>
    <property type="molecule type" value="mRNA"/>
</dbReference>
<dbReference type="EMBL" id="AL590963">
    <property type="status" value="NOT_ANNOTATED_CDS"/>
    <property type="molecule type" value="Genomic_DNA"/>
</dbReference>
<dbReference type="EMBL" id="CH466556">
    <property type="protein sequence ID" value="EDL16159.1"/>
    <property type="molecule type" value="Genomic_DNA"/>
</dbReference>
<dbReference type="EMBL" id="BC003197">
    <property type="protein sequence ID" value="AAH03197.1"/>
    <property type="molecule type" value="mRNA"/>
</dbReference>
<dbReference type="CCDS" id="CCDS25359.1"/>
<dbReference type="PIR" id="I49504">
    <property type="entry name" value="I49504"/>
</dbReference>
<dbReference type="RefSeq" id="NP_033465.1">
    <property type="nucleotide sequence ID" value="NM_009439.1"/>
</dbReference>
<dbReference type="SMR" id="P14685"/>
<dbReference type="BioGRID" id="204358">
    <property type="interactions" value="65"/>
</dbReference>
<dbReference type="FunCoup" id="P14685">
    <property type="interactions" value="2139"/>
</dbReference>
<dbReference type="IntAct" id="P14685">
    <property type="interactions" value="7"/>
</dbReference>
<dbReference type="STRING" id="10090.ENSMUSP00000017365"/>
<dbReference type="GlyGen" id="P14685">
    <property type="glycosylation" value="2 sites, 1 N-linked glycan (1 site), 1 O-linked glycan (1 site)"/>
</dbReference>
<dbReference type="iPTMnet" id="P14685"/>
<dbReference type="MetOSite" id="P14685"/>
<dbReference type="PhosphoSitePlus" id="P14685"/>
<dbReference type="SwissPalm" id="P14685"/>
<dbReference type="jPOST" id="P14685"/>
<dbReference type="PaxDb" id="10090-ENSMUSP00000017365"/>
<dbReference type="PeptideAtlas" id="P14685"/>
<dbReference type="ProteomicsDB" id="301864"/>
<dbReference type="Pumba" id="P14685"/>
<dbReference type="Antibodypedia" id="28451">
    <property type="antibodies" value="301 antibodies from 30 providers"/>
</dbReference>
<dbReference type="DNASU" id="22123"/>
<dbReference type="Ensembl" id="ENSMUST00000017365.15">
    <property type="protein sequence ID" value="ENSMUSP00000017365.9"/>
    <property type="gene ID" value="ENSMUSG00000017221.15"/>
</dbReference>
<dbReference type="GeneID" id="22123"/>
<dbReference type="KEGG" id="mmu:22123"/>
<dbReference type="UCSC" id="uc007lgw.1">
    <property type="organism name" value="mouse"/>
</dbReference>
<dbReference type="AGR" id="MGI:98858"/>
<dbReference type="CTD" id="5709"/>
<dbReference type="MGI" id="MGI:98858">
    <property type="gene designation" value="Psmd3"/>
</dbReference>
<dbReference type="VEuPathDB" id="HostDB:ENSMUSG00000017221"/>
<dbReference type="eggNOG" id="KOG2581">
    <property type="taxonomic scope" value="Eukaryota"/>
</dbReference>
<dbReference type="GeneTree" id="ENSGT00940000153653"/>
<dbReference type="HOGENOM" id="CLU_019858_1_2_1"/>
<dbReference type="InParanoid" id="P14685"/>
<dbReference type="OMA" id="AKVYFYF"/>
<dbReference type="OrthoDB" id="1713558at2759"/>
<dbReference type="PhylomeDB" id="P14685"/>
<dbReference type="TreeFam" id="TF106110"/>
<dbReference type="Reactome" id="R-MMU-1169091">
    <property type="pathway name" value="Activation of NF-kappaB in B cells"/>
</dbReference>
<dbReference type="Reactome" id="R-MMU-1234176">
    <property type="pathway name" value="Oxygen-dependent proline hydroxylation of Hypoxia-inducible Factor Alpha"/>
</dbReference>
<dbReference type="Reactome" id="R-MMU-1236978">
    <property type="pathway name" value="Cross-presentation of soluble exogenous antigens (endosomes)"/>
</dbReference>
<dbReference type="Reactome" id="R-MMU-174084">
    <property type="pathway name" value="Autodegradation of Cdh1 by Cdh1:APC/C"/>
</dbReference>
<dbReference type="Reactome" id="R-MMU-174154">
    <property type="pathway name" value="APC/C:Cdc20 mediated degradation of Securin"/>
</dbReference>
<dbReference type="Reactome" id="R-MMU-174178">
    <property type="pathway name" value="APC/C:Cdh1 mediated degradation of Cdc20 and other APC/C:Cdh1 targeted proteins in late mitosis/early G1"/>
</dbReference>
<dbReference type="Reactome" id="R-MMU-174184">
    <property type="pathway name" value="Cdc20:Phospho-APC/C mediated degradation of Cyclin A"/>
</dbReference>
<dbReference type="Reactome" id="R-MMU-187577">
    <property type="pathway name" value="SCF(Skp2)-mediated degradation of p27/p21"/>
</dbReference>
<dbReference type="Reactome" id="R-MMU-195253">
    <property type="pathway name" value="Degradation of beta-catenin by the destruction complex"/>
</dbReference>
<dbReference type="Reactome" id="R-MMU-202424">
    <property type="pathway name" value="Downstream TCR signaling"/>
</dbReference>
<dbReference type="Reactome" id="R-MMU-2467813">
    <property type="pathway name" value="Separation of Sister Chromatids"/>
</dbReference>
<dbReference type="Reactome" id="R-MMU-2871837">
    <property type="pathway name" value="FCERI mediated NF-kB activation"/>
</dbReference>
<dbReference type="Reactome" id="R-MMU-349425">
    <property type="pathway name" value="Autodegradation of the E3 ubiquitin ligase COP1"/>
</dbReference>
<dbReference type="Reactome" id="R-MMU-350562">
    <property type="pathway name" value="Regulation of ornithine decarboxylase (ODC)"/>
</dbReference>
<dbReference type="Reactome" id="R-MMU-382556">
    <property type="pathway name" value="ABC-family proteins mediated transport"/>
</dbReference>
<dbReference type="Reactome" id="R-MMU-450408">
    <property type="pathway name" value="AUF1 (hnRNP D0) binds and destabilizes mRNA"/>
</dbReference>
<dbReference type="Reactome" id="R-MMU-4608870">
    <property type="pathway name" value="Asymmetric localization of PCP proteins"/>
</dbReference>
<dbReference type="Reactome" id="R-MMU-4641257">
    <property type="pathway name" value="Degradation of AXIN"/>
</dbReference>
<dbReference type="Reactome" id="R-MMU-4641258">
    <property type="pathway name" value="Degradation of DVL"/>
</dbReference>
<dbReference type="Reactome" id="R-MMU-5358346">
    <property type="pathway name" value="Hedgehog ligand biogenesis"/>
</dbReference>
<dbReference type="Reactome" id="R-MMU-5607761">
    <property type="pathway name" value="Dectin-1 mediated noncanonical NF-kB signaling"/>
</dbReference>
<dbReference type="Reactome" id="R-MMU-5607764">
    <property type="pathway name" value="CLEC7A (Dectin-1) signaling"/>
</dbReference>
<dbReference type="Reactome" id="R-MMU-5610780">
    <property type="pathway name" value="Degradation of GLI1 by the proteasome"/>
</dbReference>
<dbReference type="Reactome" id="R-MMU-5610785">
    <property type="pathway name" value="GLI3 is processed to GLI3R by the proteasome"/>
</dbReference>
<dbReference type="Reactome" id="R-MMU-5632684">
    <property type="pathway name" value="Hedgehog 'on' state"/>
</dbReference>
<dbReference type="Reactome" id="R-MMU-5658442">
    <property type="pathway name" value="Regulation of RAS by GAPs"/>
</dbReference>
<dbReference type="Reactome" id="R-MMU-5668541">
    <property type="pathway name" value="TNFR2 non-canonical NF-kB pathway"/>
</dbReference>
<dbReference type="Reactome" id="R-MMU-5676590">
    <property type="pathway name" value="NIK--&gt;noncanonical NF-kB signaling"/>
</dbReference>
<dbReference type="Reactome" id="R-MMU-5687128">
    <property type="pathway name" value="MAPK6/MAPK4 signaling"/>
</dbReference>
<dbReference type="Reactome" id="R-MMU-5689603">
    <property type="pathway name" value="UCH proteinases"/>
</dbReference>
<dbReference type="Reactome" id="R-MMU-5689880">
    <property type="pathway name" value="Ub-specific processing proteases"/>
</dbReference>
<dbReference type="Reactome" id="R-MMU-6798695">
    <property type="pathway name" value="Neutrophil degranulation"/>
</dbReference>
<dbReference type="Reactome" id="R-MMU-68867">
    <property type="pathway name" value="Assembly of the pre-replicative complex"/>
</dbReference>
<dbReference type="Reactome" id="R-MMU-68949">
    <property type="pathway name" value="Orc1 removal from chromatin"/>
</dbReference>
<dbReference type="Reactome" id="R-MMU-69017">
    <property type="pathway name" value="CDK-mediated phosphorylation and removal of Cdc6"/>
</dbReference>
<dbReference type="Reactome" id="R-MMU-69481">
    <property type="pathway name" value="G2/M Checkpoints"/>
</dbReference>
<dbReference type="Reactome" id="R-MMU-69601">
    <property type="pathway name" value="Ubiquitin Mediated Degradation of Phosphorylated Cdc25A"/>
</dbReference>
<dbReference type="Reactome" id="R-MMU-75815">
    <property type="pathway name" value="Ubiquitin-dependent degradation of Cyclin D"/>
</dbReference>
<dbReference type="Reactome" id="R-MMU-8852276">
    <property type="pathway name" value="The role of GTSE1 in G2/M progression after G2 checkpoint"/>
</dbReference>
<dbReference type="Reactome" id="R-MMU-8854050">
    <property type="pathway name" value="FBXL7 down-regulates AURKA during mitotic entry and in early mitosis"/>
</dbReference>
<dbReference type="Reactome" id="R-MMU-8939236">
    <property type="pathway name" value="RUNX1 regulates transcription of genes involved in differentiation of HSCs"/>
</dbReference>
<dbReference type="Reactome" id="R-MMU-8939902">
    <property type="pathway name" value="Regulation of RUNX2 expression and activity"/>
</dbReference>
<dbReference type="Reactome" id="R-MMU-8941858">
    <property type="pathway name" value="Regulation of RUNX3 expression and activity"/>
</dbReference>
<dbReference type="Reactome" id="R-MMU-8948751">
    <property type="pathway name" value="Regulation of PTEN stability and activity"/>
</dbReference>
<dbReference type="Reactome" id="R-MMU-8951664">
    <property type="pathway name" value="Neddylation"/>
</dbReference>
<dbReference type="Reactome" id="R-MMU-9020702">
    <property type="pathway name" value="Interleukin-1 signaling"/>
</dbReference>
<dbReference type="Reactome" id="R-MMU-9755511">
    <property type="pathway name" value="KEAP1-NFE2L2 pathway"/>
</dbReference>
<dbReference type="Reactome" id="R-MMU-9762114">
    <property type="pathway name" value="GSK3B and BTRC:CUL1-mediated-degradation of NFE2L2"/>
</dbReference>
<dbReference type="Reactome" id="R-MMU-983168">
    <property type="pathway name" value="Antigen processing: Ubiquitination &amp; Proteasome degradation"/>
</dbReference>
<dbReference type="Reactome" id="R-MMU-9907900">
    <property type="pathway name" value="Proteasome assembly"/>
</dbReference>
<dbReference type="BioGRID-ORCS" id="22123">
    <property type="hits" value="26 hits in 75 CRISPR screens"/>
</dbReference>
<dbReference type="ChiTaRS" id="Psmd3">
    <property type="organism name" value="mouse"/>
</dbReference>
<dbReference type="PRO" id="PR:P14685"/>
<dbReference type="Proteomes" id="UP000000589">
    <property type="component" value="Chromosome 11"/>
</dbReference>
<dbReference type="RNAct" id="P14685">
    <property type="molecule type" value="protein"/>
</dbReference>
<dbReference type="Bgee" id="ENSMUSG00000017221">
    <property type="expression patterns" value="Expressed in ectoplacental cone and 265 other cell types or tissues"/>
</dbReference>
<dbReference type="ExpressionAtlas" id="P14685">
    <property type="expression patterns" value="baseline and differential"/>
</dbReference>
<dbReference type="GO" id="GO:0005829">
    <property type="term" value="C:cytosol"/>
    <property type="evidence" value="ECO:0007669"/>
    <property type="project" value="Ensembl"/>
</dbReference>
<dbReference type="GO" id="GO:0005654">
    <property type="term" value="C:nucleoplasm"/>
    <property type="evidence" value="ECO:0007669"/>
    <property type="project" value="Ensembl"/>
</dbReference>
<dbReference type="GO" id="GO:0022624">
    <property type="term" value="C:proteasome accessory complex"/>
    <property type="evidence" value="ECO:0000314"/>
    <property type="project" value="UniProtKB"/>
</dbReference>
<dbReference type="GO" id="GO:0005838">
    <property type="term" value="C:proteasome regulatory particle"/>
    <property type="evidence" value="ECO:0000314"/>
    <property type="project" value="MGI"/>
</dbReference>
<dbReference type="GO" id="GO:0030234">
    <property type="term" value="F:enzyme regulator activity"/>
    <property type="evidence" value="ECO:0007669"/>
    <property type="project" value="InterPro"/>
</dbReference>
<dbReference type="GO" id="GO:0042176">
    <property type="term" value="P:regulation of protein catabolic process"/>
    <property type="evidence" value="ECO:0007669"/>
    <property type="project" value="InterPro"/>
</dbReference>
<dbReference type="FunFam" id="1.25.40.10:FF:000174">
    <property type="entry name" value="26S proteasome non-ATPase regulatory subunit 3"/>
    <property type="match status" value="1"/>
</dbReference>
<dbReference type="FunFam" id="1.25.40.570:FF:000009">
    <property type="entry name" value="26S proteasome non-ATPase regulatory subunit 3"/>
    <property type="match status" value="1"/>
</dbReference>
<dbReference type="Gene3D" id="1.25.40.570">
    <property type="match status" value="1"/>
</dbReference>
<dbReference type="Gene3D" id="1.25.40.10">
    <property type="entry name" value="Tetratricopeptide repeat domain"/>
    <property type="match status" value="1"/>
</dbReference>
<dbReference type="InterPro" id="IPR013586">
    <property type="entry name" value="26S_Psome_reg_C"/>
</dbReference>
<dbReference type="InterPro" id="IPR050756">
    <property type="entry name" value="CSN3"/>
</dbReference>
<dbReference type="InterPro" id="IPR000717">
    <property type="entry name" value="PCI_dom"/>
</dbReference>
<dbReference type="InterPro" id="IPR011990">
    <property type="entry name" value="TPR-like_helical_dom_sf"/>
</dbReference>
<dbReference type="InterPro" id="IPR036390">
    <property type="entry name" value="WH_DNA-bd_sf"/>
</dbReference>
<dbReference type="PANTHER" id="PTHR10758:SF2">
    <property type="entry name" value="26S PROTEASOME NON-ATPASE REGULATORY SUBUNIT 3"/>
    <property type="match status" value="1"/>
</dbReference>
<dbReference type="PANTHER" id="PTHR10758">
    <property type="entry name" value="26S PROTEASOME NON-ATPASE REGULATORY SUBUNIT 3/COP9 SIGNALOSOME COMPLEX SUBUNIT 3"/>
    <property type="match status" value="1"/>
</dbReference>
<dbReference type="Pfam" id="PF01399">
    <property type="entry name" value="PCI"/>
    <property type="match status" value="1"/>
</dbReference>
<dbReference type="Pfam" id="PF08375">
    <property type="entry name" value="Rpn3_C"/>
    <property type="match status" value="1"/>
</dbReference>
<dbReference type="SMART" id="SM00753">
    <property type="entry name" value="PAM"/>
    <property type="match status" value="1"/>
</dbReference>
<dbReference type="SMART" id="SM00088">
    <property type="entry name" value="PINT"/>
    <property type="match status" value="1"/>
</dbReference>
<dbReference type="SUPFAM" id="SSF46785">
    <property type="entry name" value="Winged helix' DNA-binding domain"/>
    <property type="match status" value="1"/>
</dbReference>
<dbReference type="PROSITE" id="PS50250">
    <property type="entry name" value="PCI"/>
    <property type="match status" value="1"/>
</dbReference>
<sequence>MKQEGSARRRGADKAKPPPGGEQEPPPPAPQDVEMKEEAAAGSGSTGEGDGKAAATEHSQRELDTVTLEDIKEHVRQLEKAVSGKEPRFVLRALRMLPSTSRRLNHYVLYKAVHGFFTSNNATRDFLLPFLEEPMDTEADLQFRPRTGKAASAPLLPEVEAYLQLLMVIFLMNSKRYKEAQKISDDLMQKISTQNRRALDLVAAKCYYYHARVYEFLDKLDVVRSFLHARLRTATLRHDADGQATLLNLLLRNYLHYSLYDQAEKLVSKSVFPEQANNNEWARYLYYTGRIKAIQLEYSEARRTMTNALRKAPQHTAVGFKQTVHKLLIVVELLLGEIPDRLQFRQPSLKRSLMPYFLLTQAVRTGNLAKFNQVLDQFGEKFQTDGTYTLIIRLRHNVIKTGVRMISLSYSRISLADIAQKLQLDSPEDAEFIVAKAIRDGVIEASINHEKGYVQSKEMIDIYSTREPQLAFHQRISFCLDIHNMSVKAMRFPPKSYNKDLESAEERREREQQDLEFAKEMAEDDDDSFP</sequence>
<protein>
    <recommendedName>
        <fullName>26S proteasome non-ATPase regulatory subunit 3</fullName>
    </recommendedName>
    <alternativeName>
        <fullName>26S proteasome regulatory subunit RPN3</fullName>
    </alternativeName>
    <alternativeName>
        <fullName>26S proteasome regulatory subunit S3</fullName>
    </alternativeName>
    <alternativeName>
        <fullName>Proteasome subunit p58</fullName>
    </alternativeName>
    <alternativeName>
        <fullName>Transplantation antigen P91A</fullName>
    </alternativeName>
    <alternativeName>
        <fullName>Tum-P91A antigen</fullName>
    </alternativeName>
</protein>
<name>PSMD3_MOUSE</name>
<organism>
    <name type="scientific">Mus musculus</name>
    <name type="common">Mouse</name>
    <dbReference type="NCBI Taxonomy" id="10090"/>
    <lineage>
        <taxon>Eukaryota</taxon>
        <taxon>Metazoa</taxon>
        <taxon>Chordata</taxon>
        <taxon>Craniata</taxon>
        <taxon>Vertebrata</taxon>
        <taxon>Euteleostomi</taxon>
        <taxon>Mammalia</taxon>
        <taxon>Eutheria</taxon>
        <taxon>Euarchontoglires</taxon>
        <taxon>Glires</taxon>
        <taxon>Rodentia</taxon>
        <taxon>Myomorpha</taxon>
        <taxon>Muroidea</taxon>
        <taxon>Muridae</taxon>
        <taxon>Murinae</taxon>
        <taxon>Mus</taxon>
        <taxon>Mus</taxon>
    </lineage>
</organism>
<gene>
    <name type="primary">Psmd3</name>
    <name type="synonym">P91a</name>
    <name type="synonym">Tstap91a</name>
</gene>
<accession>P14685</accession>
<accession>Q3TP95</accession>
<accession>Q99LL7</accession>